<protein>
    <recommendedName>
        <fullName evidence="1">Small ribosomal subunit protein eS8</fullName>
    </recommendedName>
    <alternativeName>
        <fullName evidence="2">30S ribosomal protein S8e</fullName>
    </alternativeName>
</protein>
<sequence length="130" mass="14612">MAIWQGRSLRKPSGGRIILARKKRKRELGREPAFTKVAEGREKKKIIRTYGGNRKVRLIEALYANVFDGGKGKKVKVLRVVENPANRQYVRRNIITKGAIIETEIGRAIVTSRPGQHGVVNAVLIKEENA</sequence>
<feature type="chain" id="PRO_1000090258" description="Small ribosomal subunit protein eS8">
    <location>
        <begin position="1"/>
        <end position="130"/>
    </location>
</feature>
<proteinExistence type="inferred from homology"/>
<accession>B6YTF2</accession>
<name>RS8E_THEON</name>
<gene>
    <name evidence="1" type="primary">rps8e</name>
    <name type="ordered locus">TON_0354</name>
</gene>
<evidence type="ECO:0000255" key="1">
    <source>
        <dbReference type="HAMAP-Rule" id="MF_00029"/>
    </source>
</evidence>
<evidence type="ECO:0000305" key="2"/>
<keyword id="KW-0687">Ribonucleoprotein</keyword>
<keyword id="KW-0689">Ribosomal protein</keyword>
<comment type="subunit">
    <text evidence="1">Part of the 30S ribosomal subunit.</text>
</comment>
<comment type="similarity">
    <text evidence="1">Belongs to the eukaryotic ribosomal protein eS8 family.</text>
</comment>
<organism>
    <name type="scientific">Thermococcus onnurineus (strain NA1)</name>
    <dbReference type="NCBI Taxonomy" id="523850"/>
    <lineage>
        <taxon>Archaea</taxon>
        <taxon>Methanobacteriati</taxon>
        <taxon>Methanobacteriota</taxon>
        <taxon>Thermococci</taxon>
        <taxon>Thermococcales</taxon>
        <taxon>Thermococcaceae</taxon>
        <taxon>Thermococcus</taxon>
    </lineage>
</organism>
<reference key="1">
    <citation type="journal article" date="2008" name="J. Bacteriol.">
        <title>The complete genome sequence of Thermococcus onnurineus NA1 reveals a mixed heterotrophic and carboxydotrophic metabolism.</title>
        <authorList>
            <person name="Lee H.S."/>
            <person name="Kang S.G."/>
            <person name="Bae S.S."/>
            <person name="Lim J.K."/>
            <person name="Cho Y."/>
            <person name="Kim Y.J."/>
            <person name="Jeon J.H."/>
            <person name="Cha S.-S."/>
            <person name="Kwon K.K."/>
            <person name="Kim H.-T."/>
            <person name="Park C.-J."/>
            <person name="Lee H.-W."/>
            <person name="Kim S.I."/>
            <person name="Chun J."/>
            <person name="Colwell R.R."/>
            <person name="Kim S.-J."/>
            <person name="Lee J.-H."/>
        </authorList>
    </citation>
    <scope>NUCLEOTIDE SEQUENCE [LARGE SCALE GENOMIC DNA]</scope>
    <source>
        <strain>NA1</strain>
    </source>
</reference>
<dbReference type="EMBL" id="CP000855">
    <property type="protein sequence ID" value="ACJ15839.1"/>
    <property type="molecule type" value="Genomic_DNA"/>
</dbReference>
<dbReference type="RefSeq" id="WP_012571311.1">
    <property type="nucleotide sequence ID" value="NC_011529.1"/>
</dbReference>
<dbReference type="SMR" id="B6YTF2"/>
<dbReference type="STRING" id="523850.TON_0354"/>
<dbReference type="GeneID" id="7018019"/>
<dbReference type="KEGG" id="ton:TON_0354"/>
<dbReference type="PATRIC" id="fig|523850.10.peg.357"/>
<dbReference type="eggNOG" id="arCOG04154">
    <property type="taxonomic scope" value="Archaea"/>
</dbReference>
<dbReference type="HOGENOM" id="CLU_080597_2_1_2"/>
<dbReference type="OrthoDB" id="372305at2157"/>
<dbReference type="Proteomes" id="UP000002727">
    <property type="component" value="Chromosome"/>
</dbReference>
<dbReference type="GO" id="GO:1990904">
    <property type="term" value="C:ribonucleoprotein complex"/>
    <property type="evidence" value="ECO:0007669"/>
    <property type="project" value="UniProtKB-KW"/>
</dbReference>
<dbReference type="GO" id="GO:0005840">
    <property type="term" value="C:ribosome"/>
    <property type="evidence" value="ECO:0007669"/>
    <property type="project" value="UniProtKB-KW"/>
</dbReference>
<dbReference type="GO" id="GO:0003735">
    <property type="term" value="F:structural constituent of ribosome"/>
    <property type="evidence" value="ECO:0007669"/>
    <property type="project" value="InterPro"/>
</dbReference>
<dbReference type="GO" id="GO:0006412">
    <property type="term" value="P:translation"/>
    <property type="evidence" value="ECO:0007669"/>
    <property type="project" value="UniProtKB-UniRule"/>
</dbReference>
<dbReference type="CDD" id="cd11382">
    <property type="entry name" value="Ribosomal_S8e"/>
    <property type="match status" value="1"/>
</dbReference>
<dbReference type="FunFam" id="2.40.10.310:FF:000002">
    <property type="entry name" value="30S ribosomal protein S8e"/>
    <property type="match status" value="1"/>
</dbReference>
<dbReference type="Gene3D" id="2.40.10.310">
    <property type="match status" value="1"/>
</dbReference>
<dbReference type="HAMAP" id="MF_00029">
    <property type="entry name" value="Ribosomal_eS8"/>
    <property type="match status" value="1"/>
</dbReference>
<dbReference type="InterPro" id="IPR001047">
    <property type="entry name" value="Ribosomal_eS8"/>
</dbReference>
<dbReference type="InterPro" id="IPR018283">
    <property type="entry name" value="Ribosomal_eS8_CS"/>
</dbReference>
<dbReference type="InterPro" id="IPR020919">
    <property type="entry name" value="Ribosomal_protein_eS8_arc"/>
</dbReference>
<dbReference type="InterPro" id="IPR022309">
    <property type="entry name" value="Ribosomal_Se8/biogenesis_NSA2"/>
</dbReference>
<dbReference type="NCBIfam" id="TIGR00307">
    <property type="entry name" value="eS8"/>
    <property type="match status" value="1"/>
</dbReference>
<dbReference type="PANTHER" id="PTHR10394">
    <property type="entry name" value="40S RIBOSOMAL PROTEIN S8"/>
    <property type="match status" value="1"/>
</dbReference>
<dbReference type="Pfam" id="PF01201">
    <property type="entry name" value="Ribosomal_S8e"/>
    <property type="match status" value="1"/>
</dbReference>
<dbReference type="PROSITE" id="PS01193">
    <property type="entry name" value="RIBOSOMAL_S8E"/>
    <property type="match status" value="1"/>
</dbReference>